<feature type="chain" id="PRO_0000314357" description="Carboxy-S-adenosyl-L-methionine synthase">
    <location>
        <begin position="1"/>
        <end position="246"/>
    </location>
</feature>
<feature type="binding site" evidence="1">
    <location>
        <position position="39"/>
    </location>
    <ligand>
        <name>S-adenosyl-L-methionine</name>
        <dbReference type="ChEBI" id="CHEBI:59789"/>
    </ligand>
</feature>
<feature type="binding site" evidence="1">
    <location>
        <begin position="64"/>
        <end position="66"/>
    </location>
    <ligand>
        <name>S-adenosyl-L-methionine</name>
        <dbReference type="ChEBI" id="CHEBI:59789"/>
    </ligand>
</feature>
<feature type="binding site" evidence="1">
    <location>
        <begin position="89"/>
        <end position="90"/>
    </location>
    <ligand>
        <name>S-adenosyl-L-methionine</name>
        <dbReference type="ChEBI" id="CHEBI:59789"/>
    </ligand>
</feature>
<feature type="binding site" evidence="1">
    <location>
        <begin position="121"/>
        <end position="122"/>
    </location>
    <ligand>
        <name>S-adenosyl-L-methionine</name>
        <dbReference type="ChEBI" id="CHEBI:59789"/>
    </ligand>
</feature>
<feature type="binding site" evidence="1">
    <location>
        <position position="136"/>
    </location>
    <ligand>
        <name>S-adenosyl-L-methionine</name>
        <dbReference type="ChEBI" id="CHEBI:59789"/>
    </ligand>
</feature>
<feature type="binding site" evidence="1">
    <location>
        <position position="203"/>
    </location>
    <ligand>
        <name>S-adenosyl-L-methionine</name>
        <dbReference type="ChEBI" id="CHEBI:59789"/>
    </ligand>
</feature>
<evidence type="ECO:0000255" key="1">
    <source>
        <dbReference type="HAMAP-Rule" id="MF_01589"/>
    </source>
</evidence>
<reference key="1">
    <citation type="journal article" date="2006" name="Genome Biol.">
        <title>Genomic analysis reveals that Pseudomonas aeruginosa virulence is combinatorial.</title>
        <authorList>
            <person name="Lee D.G."/>
            <person name="Urbach J.M."/>
            <person name="Wu G."/>
            <person name="Liberati N.T."/>
            <person name="Feinbaum R.L."/>
            <person name="Miyata S."/>
            <person name="Diggins L.T."/>
            <person name="He J."/>
            <person name="Saucier M."/>
            <person name="Deziel E."/>
            <person name="Friedman L."/>
            <person name="Li L."/>
            <person name="Grills G."/>
            <person name="Montgomery K."/>
            <person name="Kucherlapati R."/>
            <person name="Rahme L.G."/>
            <person name="Ausubel F.M."/>
        </authorList>
    </citation>
    <scope>NUCLEOTIDE SEQUENCE [LARGE SCALE GENOMIC DNA]</scope>
    <source>
        <strain>UCBPP-PA14</strain>
    </source>
</reference>
<keyword id="KW-0949">S-adenosyl-L-methionine</keyword>
<keyword id="KW-0808">Transferase</keyword>
<dbReference type="EC" id="2.1.3.-" evidence="1"/>
<dbReference type="EMBL" id="CP000438">
    <property type="protein sequence ID" value="ABJ09927.1"/>
    <property type="molecule type" value="Genomic_DNA"/>
</dbReference>
<dbReference type="RefSeq" id="WP_003123029.1">
    <property type="nucleotide sequence ID" value="NZ_CP034244.1"/>
</dbReference>
<dbReference type="SMR" id="Q02HS7"/>
<dbReference type="KEGG" id="pau:PA14_54260"/>
<dbReference type="PseudoCAP" id="PA14_54260"/>
<dbReference type="HOGENOM" id="CLU_078475_0_0_6"/>
<dbReference type="BioCyc" id="PAER208963:G1G74-4569-MONOMER"/>
<dbReference type="Proteomes" id="UP000000653">
    <property type="component" value="Chromosome"/>
</dbReference>
<dbReference type="GO" id="GO:0016743">
    <property type="term" value="F:carboxyl- or carbamoyltransferase activity"/>
    <property type="evidence" value="ECO:0007669"/>
    <property type="project" value="UniProtKB-UniRule"/>
</dbReference>
<dbReference type="GO" id="GO:1904047">
    <property type="term" value="F:S-adenosyl-L-methionine binding"/>
    <property type="evidence" value="ECO:0007669"/>
    <property type="project" value="UniProtKB-UniRule"/>
</dbReference>
<dbReference type="GO" id="GO:0002098">
    <property type="term" value="P:tRNA wobble uridine modification"/>
    <property type="evidence" value="ECO:0007669"/>
    <property type="project" value="InterPro"/>
</dbReference>
<dbReference type="CDD" id="cd02440">
    <property type="entry name" value="AdoMet_MTases"/>
    <property type="match status" value="1"/>
</dbReference>
<dbReference type="Gene3D" id="3.40.50.150">
    <property type="entry name" value="Vaccinia Virus protein VP39"/>
    <property type="match status" value="1"/>
</dbReference>
<dbReference type="HAMAP" id="MF_01589">
    <property type="entry name" value="Cx_SAM_synthase"/>
    <property type="match status" value="1"/>
</dbReference>
<dbReference type="InterPro" id="IPR005271">
    <property type="entry name" value="CmoA"/>
</dbReference>
<dbReference type="InterPro" id="IPR041698">
    <property type="entry name" value="Methyltransf_25"/>
</dbReference>
<dbReference type="InterPro" id="IPR029063">
    <property type="entry name" value="SAM-dependent_MTases_sf"/>
</dbReference>
<dbReference type="NCBIfam" id="TIGR00740">
    <property type="entry name" value="carboxy-S-adenosyl-L-methionine synthase CmoA"/>
    <property type="match status" value="1"/>
</dbReference>
<dbReference type="NCBIfam" id="NF011995">
    <property type="entry name" value="PRK15451.1"/>
    <property type="match status" value="1"/>
</dbReference>
<dbReference type="PANTHER" id="PTHR43861:SF2">
    <property type="entry name" value="CARBOXY-S-ADENOSYL-L-METHIONINE SYNTHASE"/>
    <property type="match status" value="1"/>
</dbReference>
<dbReference type="PANTHER" id="PTHR43861">
    <property type="entry name" value="TRANS-ACONITATE 2-METHYLTRANSFERASE-RELATED"/>
    <property type="match status" value="1"/>
</dbReference>
<dbReference type="Pfam" id="PF13649">
    <property type="entry name" value="Methyltransf_25"/>
    <property type="match status" value="1"/>
</dbReference>
<dbReference type="PIRSF" id="PIRSF006325">
    <property type="entry name" value="MeTrfase_bac"/>
    <property type="match status" value="1"/>
</dbReference>
<dbReference type="SUPFAM" id="SSF53335">
    <property type="entry name" value="S-adenosyl-L-methionine-dependent methyltransferases"/>
    <property type="match status" value="1"/>
</dbReference>
<protein>
    <recommendedName>
        <fullName evidence="1">Carboxy-S-adenosyl-L-methionine synthase</fullName>
        <shortName evidence="1">Cx-SAM synthase</shortName>
        <ecNumber evidence="1">2.1.3.-</ecNumber>
    </recommendedName>
</protein>
<proteinExistence type="inferred from homology"/>
<accession>Q02HS7</accession>
<gene>
    <name evidence="1" type="primary">cmoA</name>
    <name type="ordered locus">PA14_54260</name>
</gene>
<organism>
    <name type="scientific">Pseudomonas aeruginosa (strain UCBPP-PA14)</name>
    <dbReference type="NCBI Taxonomy" id="208963"/>
    <lineage>
        <taxon>Bacteria</taxon>
        <taxon>Pseudomonadati</taxon>
        <taxon>Pseudomonadota</taxon>
        <taxon>Gammaproteobacteria</taxon>
        <taxon>Pseudomonadales</taxon>
        <taxon>Pseudomonadaceae</taxon>
        <taxon>Pseudomonas</taxon>
    </lineage>
</organism>
<name>CMOA_PSEAB</name>
<sequence>MSESDRLFAQPQQRVADFVFNEDVVRVFPDMIKRSVPGYPTIVENIGVLGAQFAQPNSVLYDLGCSLGAVTQSLRRHVRNDGCRVIGVDNSHAMIERCSEYLHAQDAMYQELLPVELIEADILALDLQPTSLVAMNFTLQFVAPDQRLGLLRRIRQALLPGGALILSEKLRFADAQEHALLTDLHIAFKRANGYSELEIAQKRSALENVMLPDTFEEHRERLLAAGFSRVSQWFQCLNFASMIALP</sequence>
<comment type="function">
    <text evidence="1">Catalyzes the conversion of S-adenosyl-L-methionine (SAM) to carboxy-S-adenosyl-L-methionine (Cx-SAM).</text>
</comment>
<comment type="catalytic activity">
    <reaction evidence="1">
        <text>prephenate + S-adenosyl-L-methionine = carboxy-S-adenosyl-L-methionine + 3-phenylpyruvate + H2O</text>
        <dbReference type="Rhea" id="RHEA:51692"/>
        <dbReference type="ChEBI" id="CHEBI:15377"/>
        <dbReference type="ChEBI" id="CHEBI:18005"/>
        <dbReference type="ChEBI" id="CHEBI:29934"/>
        <dbReference type="ChEBI" id="CHEBI:59789"/>
        <dbReference type="ChEBI" id="CHEBI:134278"/>
    </reaction>
</comment>
<comment type="subunit">
    <text evidence="1">Homodimer.</text>
</comment>
<comment type="similarity">
    <text evidence="1">Belongs to the class I-like SAM-binding methyltransferase superfamily. Cx-SAM synthase family.</text>
</comment>